<gene>
    <name evidence="1" type="primary">TRMT5</name>
    <name type="synonym">KIAA1393</name>
    <name evidence="1" type="synonym">TRM5</name>
</gene>
<proteinExistence type="evidence at protein level"/>
<reference key="1">
    <citation type="journal article" date="2004" name="Nat. Genet.">
        <title>Complete sequencing and characterization of 21,243 full-length human cDNAs.</title>
        <authorList>
            <person name="Ota T."/>
            <person name="Suzuki Y."/>
            <person name="Nishikawa T."/>
            <person name="Otsuki T."/>
            <person name="Sugiyama T."/>
            <person name="Irie R."/>
            <person name="Wakamatsu A."/>
            <person name="Hayashi K."/>
            <person name="Sato H."/>
            <person name="Nagai K."/>
            <person name="Kimura K."/>
            <person name="Makita H."/>
            <person name="Sekine M."/>
            <person name="Obayashi M."/>
            <person name="Nishi T."/>
            <person name="Shibahara T."/>
            <person name="Tanaka T."/>
            <person name="Ishii S."/>
            <person name="Yamamoto J."/>
            <person name="Saito K."/>
            <person name="Kawai Y."/>
            <person name="Isono Y."/>
            <person name="Nakamura Y."/>
            <person name="Nagahari K."/>
            <person name="Murakami K."/>
            <person name="Yasuda T."/>
            <person name="Iwayanagi T."/>
            <person name="Wagatsuma M."/>
            <person name="Shiratori A."/>
            <person name="Sudo H."/>
            <person name="Hosoiri T."/>
            <person name="Kaku Y."/>
            <person name="Kodaira H."/>
            <person name="Kondo H."/>
            <person name="Sugawara M."/>
            <person name="Takahashi M."/>
            <person name="Kanda K."/>
            <person name="Yokoi T."/>
            <person name="Furuya T."/>
            <person name="Kikkawa E."/>
            <person name="Omura Y."/>
            <person name="Abe K."/>
            <person name="Kamihara K."/>
            <person name="Katsuta N."/>
            <person name="Sato K."/>
            <person name="Tanikawa M."/>
            <person name="Yamazaki M."/>
            <person name="Ninomiya K."/>
            <person name="Ishibashi T."/>
            <person name="Yamashita H."/>
            <person name="Murakawa K."/>
            <person name="Fujimori K."/>
            <person name="Tanai H."/>
            <person name="Kimata M."/>
            <person name="Watanabe M."/>
            <person name="Hiraoka S."/>
            <person name="Chiba Y."/>
            <person name="Ishida S."/>
            <person name="Ono Y."/>
            <person name="Takiguchi S."/>
            <person name="Watanabe S."/>
            <person name="Yosida M."/>
            <person name="Hotuta T."/>
            <person name="Kusano J."/>
            <person name="Kanehori K."/>
            <person name="Takahashi-Fujii A."/>
            <person name="Hara H."/>
            <person name="Tanase T.-O."/>
            <person name="Nomura Y."/>
            <person name="Togiya S."/>
            <person name="Komai F."/>
            <person name="Hara R."/>
            <person name="Takeuchi K."/>
            <person name="Arita M."/>
            <person name="Imose N."/>
            <person name="Musashino K."/>
            <person name="Yuuki H."/>
            <person name="Oshima A."/>
            <person name="Sasaki N."/>
            <person name="Aotsuka S."/>
            <person name="Yoshikawa Y."/>
            <person name="Matsunawa H."/>
            <person name="Ichihara T."/>
            <person name="Shiohata N."/>
            <person name="Sano S."/>
            <person name="Moriya S."/>
            <person name="Momiyama H."/>
            <person name="Satoh N."/>
            <person name="Takami S."/>
            <person name="Terashima Y."/>
            <person name="Suzuki O."/>
            <person name="Nakagawa S."/>
            <person name="Senoh A."/>
            <person name="Mizoguchi H."/>
            <person name="Goto Y."/>
            <person name="Shimizu F."/>
            <person name="Wakebe H."/>
            <person name="Hishigaki H."/>
            <person name="Watanabe T."/>
            <person name="Sugiyama A."/>
            <person name="Takemoto M."/>
            <person name="Kawakami B."/>
            <person name="Yamazaki M."/>
            <person name="Watanabe K."/>
            <person name="Kumagai A."/>
            <person name="Itakura S."/>
            <person name="Fukuzumi Y."/>
            <person name="Fujimori Y."/>
            <person name="Komiyama M."/>
            <person name="Tashiro H."/>
            <person name="Tanigami A."/>
            <person name="Fujiwara T."/>
            <person name="Ono T."/>
            <person name="Yamada K."/>
            <person name="Fujii Y."/>
            <person name="Ozaki K."/>
            <person name="Hirao M."/>
            <person name="Ohmori Y."/>
            <person name="Kawabata A."/>
            <person name="Hikiji T."/>
            <person name="Kobatake N."/>
            <person name="Inagaki H."/>
            <person name="Ikema Y."/>
            <person name="Okamoto S."/>
            <person name="Okitani R."/>
            <person name="Kawakami T."/>
            <person name="Noguchi S."/>
            <person name="Itoh T."/>
            <person name="Shigeta K."/>
            <person name="Senba T."/>
            <person name="Matsumura K."/>
            <person name="Nakajima Y."/>
            <person name="Mizuno T."/>
            <person name="Morinaga M."/>
            <person name="Sasaki M."/>
            <person name="Togashi T."/>
            <person name="Oyama M."/>
            <person name="Hata H."/>
            <person name="Watanabe M."/>
            <person name="Komatsu T."/>
            <person name="Mizushima-Sugano J."/>
            <person name="Satoh T."/>
            <person name="Shirai Y."/>
            <person name="Takahashi Y."/>
            <person name="Nakagawa K."/>
            <person name="Okumura K."/>
            <person name="Nagase T."/>
            <person name="Nomura N."/>
            <person name="Kikuchi H."/>
            <person name="Masuho Y."/>
            <person name="Yamashita R."/>
            <person name="Nakai K."/>
            <person name="Yada T."/>
            <person name="Nakamura Y."/>
            <person name="Ohara O."/>
            <person name="Isogai T."/>
            <person name="Sugano S."/>
        </authorList>
    </citation>
    <scope>NUCLEOTIDE SEQUENCE [LARGE SCALE MRNA]</scope>
</reference>
<reference key="2">
    <citation type="journal article" date="2003" name="Nature">
        <title>The DNA sequence and analysis of human chromosome 14.</title>
        <authorList>
            <person name="Heilig R."/>
            <person name="Eckenberg R."/>
            <person name="Petit J.-L."/>
            <person name="Fonknechten N."/>
            <person name="Da Silva C."/>
            <person name="Cattolico L."/>
            <person name="Levy M."/>
            <person name="Barbe V."/>
            <person name="De Berardinis V."/>
            <person name="Ureta-Vidal A."/>
            <person name="Pelletier E."/>
            <person name="Vico V."/>
            <person name="Anthouard V."/>
            <person name="Rowen L."/>
            <person name="Madan A."/>
            <person name="Qin S."/>
            <person name="Sun H."/>
            <person name="Du H."/>
            <person name="Pepin K."/>
            <person name="Artiguenave F."/>
            <person name="Robert C."/>
            <person name="Cruaud C."/>
            <person name="Bruels T."/>
            <person name="Jaillon O."/>
            <person name="Friedlander L."/>
            <person name="Samson G."/>
            <person name="Brottier P."/>
            <person name="Cure S."/>
            <person name="Segurens B."/>
            <person name="Aniere F."/>
            <person name="Samain S."/>
            <person name="Crespeau H."/>
            <person name="Abbasi N."/>
            <person name="Aiach N."/>
            <person name="Boscus D."/>
            <person name="Dickhoff R."/>
            <person name="Dors M."/>
            <person name="Dubois I."/>
            <person name="Friedman C."/>
            <person name="Gouyvenoux M."/>
            <person name="James R."/>
            <person name="Madan A."/>
            <person name="Mairey-Estrada B."/>
            <person name="Mangenot S."/>
            <person name="Martins N."/>
            <person name="Menard M."/>
            <person name="Oztas S."/>
            <person name="Ratcliffe A."/>
            <person name="Shaffer T."/>
            <person name="Trask B."/>
            <person name="Vacherie B."/>
            <person name="Bellemere C."/>
            <person name="Belser C."/>
            <person name="Besnard-Gonnet M."/>
            <person name="Bartol-Mavel D."/>
            <person name="Boutard M."/>
            <person name="Briez-Silla S."/>
            <person name="Combette S."/>
            <person name="Dufosse-Laurent V."/>
            <person name="Ferron C."/>
            <person name="Lechaplais C."/>
            <person name="Louesse C."/>
            <person name="Muselet D."/>
            <person name="Magdelenat G."/>
            <person name="Pateau E."/>
            <person name="Petit E."/>
            <person name="Sirvain-Trukniewicz P."/>
            <person name="Trybou A."/>
            <person name="Vega-Czarny N."/>
            <person name="Bataille E."/>
            <person name="Bluet E."/>
            <person name="Bordelais I."/>
            <person name="Dubois M."/>
            <person name="Dumont C."/>
            <person name="Guerin T."/>
            <person name="Haffray S."/>
            <person name="Hammadi R."/>
            <person name="Muanga J."/>
            <person name="Pellouin V."/>
            <person name="Robert D."/>
            <person name="Wunderle E."/>
            <person name="Gauguet G."/>
            <person name="Roy A."/>
            <person name="Sainte-Marthe L."/>
            <person name="Verdier J."/>
            <person name="Verdier-Discala C."/>
            <person name="Hillier L.W."/>
            <person name="Fulton L."/>
            <person name="McPherson J."/>
            <person name="Matsuda F."/>
            <person name="Wilson R."/>
            <person name="Scarpelli C."/>
            <person name="Gyapay G."/>
            <person name="Wincker P."/>
            <person name="Saurin W."/>
            <person name="Quetier F."/>
            <person name="Waterston R."/>
            <person name="Hood L."/>
            <person name="Weissenbach J."/>
        </authorList>
    </citation>
    <scope>NUCLEOTIDE SEQUENCE [LARGE SCALE GENOMIC DNA]</scope>
</reference>
<reference key="3">
    <citation type="submission" date="2005-07" db="EMBL/GenBank/DDBJ databases">
        <authorList>
            <person name="Mural R.J."/>
            <person name="Istrail S."/>
            <person name="Sutton G."/>
            <person name="Florea L."/>
            <person name="Halpern A.L."/>
            <person name="Mobarry C.M."/>
            <person name="Lippert R."/>
            <person name="Walenz B."/>
            <person name="Shatkay H."/>
            <person name="Dew I."/>
            <person name="Miller J.R."/>
            <person name="Flanigan M.J."/>
            <person name="Edwards N.J."/>
            <person name="Bolanos R."/>
            <person name="Fasulo D."/>
            <person name="Halldorsson B.V."/>
            <person name="Hannenhalli S."/>
            <person name="Turner R."/>
            <person name="Yooseph S."/>
            <person name="Lu F."/>
            <person name="Nusskern D.R."/>
            <person name="Shue B.C."/>
            <person name="Zheng X.H."/>
            <person name="Zhong F."/>
            <person name="Delcher A.L."/>
            <person name="Huson D.H."/>
            <person name="Kravitz S.A."/>
            <person name="Mouchard L."/>
            <person name="Reinert K."/>
            <person name="Remington K.A."/>
            <person name="Clark A.G."/>
            <person name="Waterman M.S."/>
            <person name="Eichler E.E."/>
            <person name="Adams M.D."/>
            <person name="Hunkapiller M.W."/>
            <person name="Myers E.W."/>
            <person name="Venter J.C."/>
        </authorList>
    </citation>
    <scope>NUCLEOTIDE SEQUENCE [LARGE SCALE GENOMIC DNA]</scope>
</reference>
<reference key="4">
    <citation type="journal article" date="2004" name="Genome Res.">
        <title>The status, quality, and expansion of the NIH full-length cDNA project: the Mammalian Gene Collection (MGC).</title>
        <authorList>
            <consortium name="The MGC Project Team"/>
        </authorList>
    </citation>
    <scope>NUCLEOTIDE SEQUENCE [LARGE SCALE MRNA]</scope>
    <source>
        <tissue>Bone</tissue>
    </source>
</reference>
<reference key="5">
    <citation type="journal article" date="2000" name="DNA Res.">
        <title>Prediction of the coding sequences of unidentified human genes. XVI. The complete sequences of 150 new cDNA clones from brain which code for large proteins in vitro.</title>
        <authorList>
            <person name="Nagase T."/>
            <person name="Kikuno R."/>
            <person name="Ishikawa K."/>
            <person name="Hirosawa M."/>
            <person name="Ohara O."/>
        </authorList>
    </citation>
    <scope>NUCLEOTIDE SEQUENCE [LARGE SCALE MRNA] OF 10-509</scope>
    <source>
        <tissue>Brain</tissue>
    </source>
</reference>
<reference key="6">
    <citation type="journal article" date="2004" name="Biochemistry">
        <title>Isolation and characterization of the human tRNA-(N1G37) methyltransferase (TRM5) and comparison to the Escherichia coli TrmD protein.</title>
        <authorList>
            <person name="Brule H."/>
            <person name="Elliott M."/>
            <person name="Redlak M."/>
            <person name="Zehner Z.E."/>
            <person name="Holmes W.M."/>
        </authorList>
    </citation>
    <scope>CATALYTIC ACTIVITY</scope>
    <scope>SUBUNIT</scope>
</reference>
<reference key="7">
    <citation type="journal article" date="2011" name="BMC Syst. Biol.">
        <title>Initial characterization of the human central proteome.</title>
        <authorList>
            <person name="Burkard T.R."/>
            <person name="Planyavsky M."/>
            <person name="Kaupe I."/>
            <person name="Breitwieser F.P."/>
            <person name="Buerckstuemmer T."/>
            <person name="Bennett K.L."/>
            <person name="Superti-Furga G."/>
            <person name="Colinge J."/>
        </authorList>
    </citation>
    <scope>IDENTIFICATION BY MASS SPECTROMETRY [LARGE SCALE ANALYSIS]</scope>
</reference>
<reference key="8">
    <citation type="journal article" date="2015" name="Am. J. Hum. Genet.">
        <title>TRMT5 mutations cause a defect in post-transcriptional modification of mitochondrial tRNA associated with multiple respiratory-chain deficiencies.</title>
        <authorList>
            <person name="Powell C.A."/>
            <person name="Kopajtich R."/>
            <person name="D'Souza A.R."/>
            <person name="Rorbach J."/>
            <person name="Kremer L.S."/>
            <person name="Husain R.A."/>
            <person name="Dallabona C."/>
            <person name="Donnini C."/>
            <person name="Alston C.L."/>
            <person name="Griffin H."/>
            <person name="Pyle A."/>
            <person name="Chinnery P.F."/>
            <person name="Strom T.M."/>
            <person name="Meitinger T."/>
            <person name="Rodenburg R.J."/>
            <person name="Schottmann G."/>
            <person name="Schuelke M."/>
            <person name="Romain N."/>
            <person name="Haller R.G."/>
            <person name="Ferrero I."/>
            <person name="Haack T.B."/>
            <person name="Taylor R.W."/>
            <person name="Prokisch H."/>
            <person name="Minczuk M."/>
        </authorList>
    </citation>
    <scope>FUNCTION</scope>
    <scope>SUBCELLULAR LOCATION</scope>
    <scope>INVOLVEMENT IN PNSED</scope>
    <scope>VARIANTS PNSED HIS-291 AND VAL-386</scope>
    <scope>CHARACTERIZATION OF VARIANTS PNSED HIS-291 AND VAL-386</scope>
</reference>
<accession>Q32P41</accession>
<accession>B2RN19</accession>
<accession>Q9P2F4</accession>
<sequence length="509" mass="58256">MVLWILWRPFGFSGRFLKLESHSITESKSLIPVAWTSLTQMLLEAPGIFLLGQRKRFSTMPETETHERETELFSPPSDVRGMTKLDRTAFKKTVNIPVLKVRKEIVSKLMRSLKRAALQRPGIRRVIEDPEDKESRLIMLDPYKIFTHDSFEKAELSVLEQLNVSPQISKYNLELTYEHFKSEEILRAVLPEGQDVTSGFSRIGHIAHLNLRDHQLPFKHLIGQVMIDKNPGITSAVNKINNIDNMYRNFQMEVLSGEQNMMTKVRENNYTYEFDFSKVYWNPRLSTEHSRITELLKPGDVLFDVFAGVGPFAIPVAKKNCTVFANDLNPESHKWLLYNCKLNKVDQKVKVFNLDGKDFLQGPVKEELMQLLGLSKERKPSVHVVMNLPAKAIEFLSAFKWLLDGQPCSSEFLPIVHCYSFSKDANPAEDVRQRAGAVLGISLEACSSVHLVRNVAPNKEMLCITFQIPASVLYKNQTRNPENHEDPPLKRQRTAEAFSDEKTQIVSNT</sequence>
<feature type="chain" id="PRO_0000256513" description="tRNA (guanine(37)-N(1))-methyltransferase">
    <location>
        <begin position="1"/>
        <end position="509"/>
    </location>
</feature>
<feature type="region of interest" description="Disordered" evidence="2">
    <location>
        <begin position="478"/>
        <end position="509"/>
    </location>
</feature>
<feature type="binding site" evidence="1">
    <location>
        <position position="289"/>
    </location>
    <ligand>
        <name>S-adenosyl-L-methionine</name>
        <dbReference type="ChEBI" id="CHEBI:59789"/>
    </ligand>
</feature>
<feature type="binding site" evidence="1">
    <location>
        <begin position="327"/>
        <end position="328"/>
    </location>
    <ligand>
        <name>S-adenosyl-L-methionine</name>
        <dbReference type="ChEBI" id="CHEBI:59789"/>
    </ligand>
</feature>
<feature type="binding site" evidence="1">
    <location>
        <begin position="355"/>
        <end position="356"/>
    </location>
    <ligand>
        <name>S-adenosyl-L-methionine</name>
        <dbReference type="ChEBI" id="CHEBI:59789"/>
    </ligand>
</feature>
<feature type="binding site" evidence="1">
    <location>
        <position position="387"/>
    </location>
    <ligand>
        <name>S-adenosyl-L-methionine</name>
        <dbReference type="ChEBI" id="CHEBI:59789"/>
    </ligand>
</feature>
<feature type="sequence variant" id="VAR_028898" description="In dbSNP:rs7142228.">
    <original>P</original>
    <variation>S</variation>
    <location>
        <position position="217"/>
    </location>
</feature>
<feature type="sequence variant" id="VAR_028899" description="In dbSNP:rs2882686.">
    <original>L</original>
    <variation>P</variation>
    <location>
        <position position="255"/>
    </location>
</feature>
<feature type="sequence variant" id="VAR_075655" description="In PNSED; decreased mitochondrial tRNA methylation; dbSNP:rs746738473." evidence="4">
    <original>R</original>
    <variation>H</variation>
    <location>
        <position position="291"/>
    </location>
</feature>
<feature type="sequence variant" id="VAR_028900" description="In dbSNP:rs2296928.">
    <original>E</original>
    <variation>A</variation>
    <location>
        <position position="294"/>
    </location>
</feature>
<feature type="sequence variant" id="VAR_075656" description="In PNSED; decreased mitochondrial tRNA methylation; dbSNP:rs1057517685." evidence="4">
    <original>M</original>
    <variation>V</variation>
    <location>
        <position position="386"/>
    </location>
</feature>
<feature type="sequence conflict" description="In Ref. 5; BAA92631." evidence="5" ref="5">
    <original>E</original>
    <variation>K</variation>
    <location>
        <position position="394"/>
    </location>
</feature>
<name>TRM5_HUMAN</name>
<comment type="function">
    <text evidence="4">Involved in mitochondrial tRNA methylation (PubMed:26189817). Specifically methylates the N1 position of guanosine-37 in various tRNAs. Methylation is not dependent on the nature of the nucleoside 5' of the target nucleoside. This is the first step in the biosynthesis of wybutosine (yW), a modified base adjacent to the anticodon of tRNAs and required for accurate decoding.</text>
</comment>
<comment type="catalytic activity">
    <reaction evidence="1 3">
        <text>guanosine(37) in tRNA + S-adenosyl-L-methionine = N(1)-methylguanosine(37) in tRNA + S-adenosyl-L-homocysteine + H(+)</text>
        <dbReference type="Rhea" id="RHEA:36899"/>
        <dbReference type="Rhea" id="RHEA-COMP:10145"/>
        <dbReference type="Rhea" id="RHEA-COMP:10147"/>
        <dbReference type="ChEBI" id="CHEBI:15378"/>
        <dbReference type="ChEBI" id="CHEBI:57856"/>
        <dbReference type="ChEBI" id="CHEBI:59789"/>
        <dbReference type="ChEBI" id="CHEBI:73542"/>
        <dbReference type="ChEBI" id="CHEBI:74269"/>
        <dbReference type="EC" id="2.1.1.228"/>
    </reaction>
</comment>
<comment type="subunit">
    <text evidence="1 3">Monomer.</text>
</comment>
<comment type="subcellular location">
    <subcellularLocation>
        <location evidence="1 4">Mitochondrion matrix</location>
    </subcellularLocation>
    <subcellularLocation>
        <location evidence="1">Nucleus</location>
    </subcellularLocation>
    <subcellularLocation>
        <location evidence="1">Cytoplasm</location>
    </subcellularLocation>
    <text evidence="1">Predominantly in the mitochondria and in the nucleus.</text>
</comment>
<comment type="disease" evidence="4">
    <disease id="DI-04526">
        <name>Peripheral neuropathy with variable spasticity, exercise intolerance, and developmental delay</name>
        <acronym>PNSED</acronym>
        <description>An autosomal recessive mitochondrial disorder with multisystemic and highly variable manifestations. Affected individuals suffer from a peripheral neuropathy, with distal muscle weakness and atrophy, and distal sensory impairment. Additional variable features include early-onset hypotonia and global developmental delay, poor or absent motor skills, exercise intolerance, poor growth, cerebellar signs, spasticity, and seizures. Biochemical analysis may show deficiencies in mitochondrial respiratory complex. Lactic acidosis is frequently observed.</description>
        <dbReference type="MIM" id="616539"/>
    </disease>
    <text>The disease is caused by variants affecting the gene represented in this entry.</text>
</comment>
<comment type="similarity">
    <text evidence="5">Belongs to the class I-like SAM-binding methyltransferase superfamily. TRM5/TYW2 family.</text>
</comment>
<protein>
    <recommendedName>
        <fullName evidence="1">tRNA (guanine(37)-N(1))-methyltransferase</fullName>
        <ecNumber evidence="1">2.1.1.228</ecNumber>
    </recommendedName>
    <alternativeName>
        <fullName evidence="1">M1G-methyltransferase</fullName>
    </alternativeName>
    <alternativeName>
        <fullName evidence="1">tRNA [GM37] methyltransferase</fullName>
    </alternativeName>
    <alternativeName>
        <fullName evidence="1">tRNA methyltransferase 5 homolog</fullName>
    </alternativeName>
</protein>
<dbReference type="EC" id="2.1.1.228" evidence="1"/>
<dbReference type="EMBL" id="AK293158">
    <property type="protein sequence ID" value="BAG56703.1"/>
    <property type="molecule type" value="mRNA"/>
</dbReference>
<dbReference type="EMBL" id="AL160236">
    <property type="status" value="NOT_ANNOTATED_CDS"/>
    <property type="molecule type" value="Genomic_DNA"/>
</dbReference>
<dbReference type="EMBL" id="CH471061">
    <property type="protein sequence ID" value="EAW80792.1"/>
    <property type="molecule type" value="Genomic_DNA"/>
</dbReference>
<dbReference type="EMBL" id="BC108284">
    <property type="protein sequence ID" value="AAI08285.1"/>
    <property type="molecule type" value="mRNA"/>
</dbReference>
<dbReference type="EMBL" id="BC136606">
    <property type="protein sequence ID" value="AAI36607.1"/>
    <property type="molecule type" value="mRNA"/>
</dbReference>
<dbReference type="EMBL" id="BC136607">
    <property type="protein sequence ID" value="AAI36608.1"/>
    <property type="molecule type" value="mRNA"/>
</dbReference>
<dbReference type="EMBL" id="AB037814">
    <property type="protein sequence ID" value="BAA92631.1"/>
    <property type="molecule type" value="mRNA"/>
</dbReference>
<dbReference type="CCDS" id="CCDS32092.1"/>
<dbReference type="RefSeq" id="NP_065861.3">
    <property type="nucleotide sequence ID" value="NM_020810.3"/>
</dbReference>
<dbReference type="SMR" id="Q32P41"/>
<dbReference type="BioGRID" id="121623">
    <property type="interactions" value="50"/>
</dbReference>
<dbReference type="FunCoup" id="Q32P41">
    <property type="interactions" value="2397"/>
</dbReference>
<dbReference type="IntAct" id="Q32P41">
    <property type="interactions" value="9"/>
</dbReference>
<dbReference type="STRING" id="9606.ENSP00000261249"/>
<dbReference type="GlyGen" id="Q32P41">
    <property type="glycosylation" value="1 site, 1 N-linked glycan (1 site)"/>
</dbReference>
<dbReference type="iPTMnet" id="Q32P41"/>
<dbReference type="PhosphoSitePlus" id="Q32P41"/>
<dbReference type="BioMuta" id="TRMT5"/>
<dbReference type="DMDM" id="145559536"/>
<dbReference type="jPOST" id="Q32P41"/>
<dbReference type="MassIVE" id="Q32P41"/>
<dbReference type="PaxDb" id="9606-ENSP00000261249"/>
<dbReference type="PeptideAtlas" id="Q32P41"/>
<dbReference type="ProteomicsDB" id="61623"/>
<dbReference type="Pumba" id="Q32P41"/>
<dbReference type="Antibodypedia" id="85">
    <property type="antibodies" value="70 antibodies from 20 providers"/>
</dbReference>
<dbReference type="DNASU" id="57570"/>
<dbReference type="Ensembl" id="ENST00000261249.7">
    <property type="protein sequence ID" value="ENSP00000261249.6"/>
    <property type="gene ID" value="ENSG00000126814.7"/>
</dbReference>
<dbReference type="GeneID" id="57570"/>
<dbReference type="KEGG" id="hsa:57570"/>
<dbReference type="MANE-Select" id="ENST00000261249.7">
    <property type="protein sequence ID" value="ENSP00000261249.6"/>
    <property type="RefSeq nucleotide sequence ID" value="NM_020810.3"/>
    <property type="RefSeq protein sequence ID" value="NP_065861.3"/>
</dbReference>
<dbReference type="UCSC" id="uc001xff.5">
    <property type="organism name" value="human"/>
</dbReference>
<dbReference type="AGR" id="HGNC:23141"/>
<dbReference type="CTD" id="57570"/>
<dbReference type="DisGeNET" id="57570"/>
<dbReference type="GeneCards" id="TRMT5"/>
<dbReference type="HGNC" id="HGNC:23141">
    <property type="gene designation" value="TRMT5"/>
</dbReference>
<dbReference type="HPA" id="ENSG00000126814">
    <property type="expression patterns" value="Low tissue specificity"/>
</dbReference>
<dbReference type="MalaCards" id="TRMT5"/>
<dbReference type="MIM" id="611023">
    <property type="type" value="gene"/>
</dbReference>
<dbReference type="MIM" id="616539">
    <property type="type" value="phenotype"/>
</dbReference>
<dbReference type="neXtProt" id="NX_Q32P41"/>
<dbReference type="OpenTargets" id="ENSG00000126814"/>
<dbReference type="Orphanet" id="477684">
    <property type="disease" value="Combined oxidative phosphorylation defect type 26"/>
</dbReference>
<dbReference type="PharmGKB" id="PA134952106"/>
<dbReference type="VEuPathDB" id="HostDB:ENSG00000126814"/>
<dbReference type="eggNOG" id="KOG2078">
    <property type="taxonomic scope" value="Eukaryota"/>
</dbReference>
<dbReference type="GeneTree" id="ENSGT00940000153304"/>
<dbReference type="HOGENOM" id="CLU_022610_2_3_1"/>
<dbReference type="InParanoid" id="Q32P41"/>
<dbReference type="OMA" id="VGSHSQF"/>
<dbReference type="OrthoDB" id="408788at2759"/>
<dbReference type="PAN-GO" id="Q32P41">
    <property type="GO annotations" value="5 GO annotations based on evolutionary models"/>
</dbReference>
<dbReference type="PhylomeDB" id="Q32P41"/>
<dbReference type="TreeFam" id="TF315073"/>
<dbReference type="BRENDA" id="2.1.1.228">
    <property type="organism ID" value="2681"/>
</dbReference>
<dbReference type="PathwayCommons" id="Q32P41"/>
<dbReference type="Reactome" id="R-HSA-6782861">
    <property type="pathway name" value="Synthesis of wybutosine at G37 of tRNA(Phe)"/>
</dbReference>
<dbReference type="SABIO-RK" id="Q32P41"/>
<dbReference type="SignaLink" id="Q32P41"/>
<dbReference type="BioGRID-ORCS" id="57570">
    <property type="hits" value="606 hits in 1178 CRISPR screens"/>
</dbReference>
<dbReference type="ChiTaRS" id="TRMT5">
    <property type="organism name" value="human"/>
</dbReference>
<dbReference type="GenomeRNAi" id="57570"/>
<dbReference type="Pharos" id="Q32P41">
    <property type="development level" value="Tbio"/>
</dbReference>
<dbReference type="PRO" id="PR:Q32P41"/>
<dbReference type="Proteomes" id="UP000005640">
    <property type="component" value="Chromosome 14"/>
</dbReference>
<dbReference type="RNAct" id="Q32P41">
    <property type="molecule type" value="protein"/>
</dbReference>
<dbReference type="Bgee" id="ENSG00000126814">
    <property type="expression patterns" value="Expressed in sperm and 169 other cell types or tissues"/>
</dbReference>
<dbReference type="ExpressionAtlas" id="Q32P41">
    <property type="expression patterns" value="baseline and differential"/>
</dbReference>
<dbReference type="GO" id="GO:0005737">
    <property type="term" value="C:cytoplasm"/>
    <property type="evidence" value="ECO:0000318"/>
    <property type="project" value="GO_Central"/>
</dbReference>
<dbReference type="GO" id="GO:0005759">
    <property type="term" value="C:mitochondrial matrix"/>
    <property type="evidence" value="ECO:0000314"/>
    <property type="project" value="UniProtKB"/>
</dbReference>
<dbReference type="GO" id="GO:0005739">
    <property type="term" value="C:mitochondrion"/>
    <property type="evidence" value="ECO:0006056"/>
    <property type="project" value="FlyBase"/>
</dbReference>
<dbReference type="GO" id="GO:0005634">
    <property type="term" value="C:nucleus"/>
    <property type="evidence" value="ECO:0007669"/>
    <property type="project" value="UniProtKB-SubCell"/>
</dbReference>
<dbReference type="GO" id="GO:0052906">
    <property type="term" value="F:tRNA (guanine(37)-N1)-methyltransferase activity"/>
    <property type="evidence" value="ECO:0007669"/>
    <property type="project" value="UniProtKB-UniRule"/>
</dbReference>
<dbReference type="GO" id="GO:0008175">
    <property type="term" value="F:tRNA methyltransferase activity"/>
    <property type="evidence" value="ECO:0000318"/>
    <property type="project" value="GO_Central"/>
</dbReference>
<dbReference type="GO" id="GO:0070901">
    <property type="term" value="P:mitochondrial tRNA methylation"/>
    <property type="evidence" value="ECO:0000315"/>
    <property type="project" value="UniProtKB"/>
</dbReference>
<dbReference type="GO" id="GO:0002939">
    <property type="term" value="P:tRNA N1-guanine methylation"/>
    <property type="evidence" value="ECO:0000318"/>
    <property type="project" value="GO_Central"/>
</dbReference>
<dbReference type="FunFam" id="3.30.300.110:FF:000001">
    <property type="entry name" value="tRNA (guanine(37)-N1)-methyltransferase"/>
    <property type="match status" value="1"/>
</dbReference>
<dbReference type="FunFam" id="3.40.50.150:FF:000102">
    <property type="entry name" value="tRNA (guanine(37)-N1)-methyltransferase"/>
    <property type="match status" value="1"/>
</dbReference>
<dbReference type="Gene3D" id="3.30.300.110">
    <property type="entry name" value="Met-10+ protein-like domains"/>
    <property type="match status" value="1"/>
</dbReference>
<dbReference type="Gene3D" id="3.40.50.150">
    <property type="entry name" value="Vaccinia Virus protein VP39"/>
    <property type="match status" value="1"/>
</dbReference>
<dbReference type="HAMAP" id="MF_03152">
    <property type="entry name" value="TRM5"/>
    <property type="match status" value="1"/>
</dbReference>
<dbReference type="InterPro" id="IPR030382">
    <property type="entry name" value="MeTrfase_TRM5/TYW2"/>
</dbReference>
<dbReference type="InterPro" id="IPR029063">
    <property type="entry name" value="SAM-dependent_MTases_sf"/>
</dbReference>
<dbReference type="InterPro" id="IPR056743">
    <property type="entry name" value="TRM5-TYW2-like_MTfase"/>
</dbReference>
<dbReference type="InterPro" id="IPR056744">
    <property type="entry name" value="TRM5/TYW2-like_N"/>
</dbReference>
<dbReference type="InterPro" id="IPR025792">
    <property type="entry name" value="tRNA_Gua_MeTrfase_euk"/>
</dbReference>
<dbReference type="PANTHER" id="PTHR23245:SF36">
    <property type="entry name" value="TRNA (GUANINE(37)-N1)-METHYLTRANSFERASE"/>
    <property type="match status" value="1"/>
</dbReference>
<dbReference type="PANTHER" id="PTHR23245">
    <property type="entry name" value="TRNA METHYLTRANSFERASE"/>
    <property type="match status" value="1"/>
</dbReference>
<dbReference type="Pfam" id="PF02475">
    <property type="entry name" value="TRM5-TYW2_MTfase"/>
    <property type="match status" value="1"/>
</dbReference>
<dbReference type="Pfam" id="PF25133">
    <property type="entry name" value="TYW2_N_2"/>
    <property type="match status" value="1"/>
</dbReference>
<dbReference type="SUPFAM" id="SSF53335">
    <property type="entry name" value="S-adenosyl-L-methionine-dependent methyltransferases"/>
    <property type="match status" value="1"/>
</dbReference>
<dbReference type="PROSITE" id="PS51684">
    <property type="entry name" value="SAM_MT_TRM5_TYW2"/>
    <property type="match status" value="1"/>
</dbReference>
<keyword id="KW-0963">Cytoplasm</keyword>
<keyword id="KW-0225">Disease variant</keyword>
<keyword id="KW-0489">Methyltransferase</keyword>
<keyword id="KW-0496">Mitochondrion</keyword>
<keyword id="KW-0539">Nucleus</keyword>
<keyword id="KW-1274">Primary mitochondrial disease</keyword>
<keyword id="KW-1267">Proteomics identification</keyword>
<keyword id="KW-1185">Reference proteome</keyword>
<keyword id="KW-0949">S-adenosyl-L-methionine</keyword>
<keyword id="KW-0808">Transferase</keyword>
<keyword id="KW-0819">tRNA processing</keyword>
<organism>
    <name type="scientific">Homo sapiens</name>
    <name type="common">Human</name>
    <dbReference type="NCBI Taxonomy" id="9606"/>
    <lineage>
        <taxon>Eukaryota</taxon>
        <taxon>Metazoa</taxon>
        <taxon>Chordata</taxon>
        <taxon>Craniata</taxon>
        <taxon>Vertebrata</taxon>
        <taxon>Euteleostomi</taxon>
        <taxon>Mammalia</taxon>
        <taxon>Eutheria</taxon>
        <taxon>Euarchontoglires</taxon>
        <taxon>Primates</taxon>
        <taxon>Haplorrhini</taxon>
        <taxon>Catarrhini</taxon>
        <taxon>Hominidae</taxon>
        <taxon>Homo</taxon>
    </lineage>
</organism>
<evidence type="ECO:0000255" key="1">
    <source>
        <dbReference type="HAMAP-Rule" id="MF_03152"/>
    </source>
</evidence>
<evidence type="ECO:0000256" key="2">
    <source>
        <dbReference type="SAM" id="MobiDB-lite"/>
    </source>
</evidence>
<evidence type="ECO:0000269" key="3">
    <source>
    </source>
</evidence>
<evidence type="ECO:0000269" key="4">
    <source>
    </source>
</evidence>
<evidence type="ECO:0000305" key="5"/>